<geneLocation type="plasmid">
    <name>pNRC200</name>
</geneLocation>
<keyword id="KW-0304">Gas vesicle</keyword>
<keyword id="KW-0614">Plasmid</keyword>
<keyword id="KW-1185">Reference proteome</keyword>
<keyword id="KW-0677">Repeat</keyword>
<gene>
    <name evidence="9" type="primary">gvpC3</name>
    <name evidence="7" type="synonym">c-gvpC</name>
    <name type="synonym">gvpC</name>
    <name evidence="6" type="synonym">gvpC2</name>
    <name type="ordered locus">VNG_6242G</name>
</gene>
<protein>
    <recommendedName>
        <fullName>Gas vesicle protein C2</fullName>
        <shortName>GvpC2</shortName>
        <shortName evidence="8">cGvpC</shortName>
    </recommendedName>
</protein>
<evidence type="ECO:0000250" key="1">
    <source>
        <dbReference type="UniProtKB" id="P24574"/>
    </source>
</evidence>
<evidence type="ECO:0000269" key="2">
    <source>
    </source>
</evidence>
<evidence type="ECO:0000269" key="3">
    <source>
    </source>
</evidence>
<evidence type="ECO:0000269" key="4">
    <source>
    </source>
</evidence>
<evidence type="ECO:0000269" key="5">
    <source>
    </source>
</evidence>
<evidence type="ECO:0000303" key="6">
    <source>
    </source>
</evidence>
<evidence type="ECO:0000303" key="7">
    <source>
    </source>
</evidence>
<evidence type="ECO:0000303" key="8">
    <source>
    </source>
</evidence>
<evidence type="ECO:0000305" key="9"/>
<evidence type="ECO:0000305" key="10">
    <source>
    </source>
</evidence>
<evidence type="ECO:0000312" key="11">
    <source>
        <dbReference type="EMBL" id="CAA64340.1"/>
    </source>
</evidence>
<name>GVPC2_HALSA</name>
<dbReference type="EMBL" id="X64730">
    <property type="protein sequence ID" value="CAA45993.1"/>
    <property type="molecule type" value="Genomic_DNA"/>
</dbReference>
<dbReference type="EMBL" id="X94688">
    <property type="protein sequence ID" value="CAA64340.1"/>
    <property type="molecule type" value="Genomic_DNA"/>
</dbReference>
<dbReference type="EMBL" id="AE004438">
    <property type="protein sequence ID" value="AAG20896.1"/>
    <property type="status" value="ALT_INIT"/>
    <property type="molecule type" value="Genomic_DNA"/>
</dbReference>
<dbReference type="RefSeq" id="WP_012289628.1">
    <property type="nucleotide sequence ID" value="NZ_BK010831.1"/>
</dbReference>
<dbReference type="SMR" id="Q9HHT0"/>
<dbReference type="GeneID" id="89343667"/>
<dbReference type="KEGG" id="hal:VNG_6242G"/>
<dbReference type="PATRIC" id="fig|64091.14.peg.2244"/>
<dbReference type="HOGENOM" id="CLU_060058_0_0_2"/>
<dbReference type="InParanoid" id="Q9HHT0"/>
<dbReference type="Proteomes" id="UP000000554">
    <property type="component" value="Plasmid pNRC200"/>
</dbReference>
<dbReference type="GO" id="GO:0031411">
    <property type="term" value="C:gas vesicle"/>
    <property type="evidence" value="ECO:0007669"/>
    <property type="project" value="UniProtKB-SubCell"/>
</dbReference>
<dbReference type="GO" id="GO:0031412">
    <property type="term" value="P:gas vesicle organization"/>
    <property type="evidence" value="ECO:0007669"/>
    <property type="project" value="InterPro"/>
</dbReference>
<dbReference type="InterPro" id="IPR008639">
    <property type="entry name" value="Gas-vesicle_GvpC_halobac"/>
</dbReference>
<dbReference type="Pfam" id="PF05465">
    <property type="entry name" value="Halo_GVPC"/>
    <property type="match status" value="4"/>
</dbReference>
<proteinExistence type="evidence at protein level"/>
<organism>
    <name type="scientific">Halobacterium salinarum (strain ATCC 700922 / JCM 11081 / NRC-1)</name>
    <name type="common">Halobacterium halobium</name>
    <dbReference type="NCBI Taxonomy" id="64091"/>
    <lineage>
        <taxon>Archaea</taxon>
        <taxon>Methanobacteriati</taxon>
        <taxon>Methanobacteriota</taxon>
        <taxon>Stenosarchaea group</taxon>
        <taxon>Halobacteria</taxon>
        <taxon>Halobacteriales</taxon>
        <taxon>Halobacteriaceae</taxon>
        <taxon>Halobacterium</taxon>
        <taxon>Halobacterium salinarum NRC-34001</taxon>
    </lineage>
</organism>
<comment type="function">
    <text evidence="1 3">Confers stability, involved in shaping gas vesicles (GV), hollow, gas filled proteinaceous nanostructures (By similarity). GVs allow positioning of halobacteria at an optimal depth for growth in the poorly aerated, shallow brine pools of their habitat (PubMed:33711860).</text>
</comment>
<comment type="function">
    <text evidence="5">Expression of 2 c-vac DNA fragments containing 2 divergently transcribed regions (gvpE-gvpF-gvpG-gvpH-gvpI-gvpJ-gvpK-gvpL-gvpM and gvpA-gvpC-gvpN-gvpO) allows H.volcanii to produce gas vesicles.</text>
</comment>
<comment type="subcellular location">
    <subcellularLocation>
        <location evidence="10">Gas vesicle</location>
    </subcellularLocation>
    <text evidence="1">Binds to the external surface of the gas vesicle membrane.</text>
</comment>
<comment type="induction">
    <text evidence="3 4">In PHH4 (a deletion of the p-vac locus) not transcribed in exponential phase, transcribed from stationary to mid-stationary phase. Small amounts of longer transcripts that probably include gvpC-gvpN-gvpO and further downstream are also seen (PubMed:8763925). Gas vesicles appear earlier when grown in static culture, possibly due to O(2)-limitation (PubMed:33711860).</text>
</comment>
<comment type="miscellaneous">
    <text evidence="2 4">Encoded in a 14-gene locus called c-vac which produces cylindrical gas vesicles only in the stationary growth phase.</text>
</comment>
<comment type="similarity">
    <text>Belongs to the halobacterial gas vesicle GvpC family.</text>
</comment>
<comment type="sequence caution" evidence="9">
    <conflict type="erroneous initiation">
        <sequence resource="EMBL-CDS" id="AAG20896"/>
    </conflict>
    <text>Truncated N-terminus.</text>
</comment>
<accession>Q9HHT0</accession>
<accession>Q48310</accession>
<reference key="1">
    <citation type="journal article" date="1992" name="J. Mol. Biol.">
        <title>Three different but related gene clusters encoding gas vesicles in halophilic archaea.</title>
        <authorList>
            <person name="Englert C."/>
            <person name="Krueger K."/>
            <person name="Offner S."/>
            <person name="Pfeifer F."/>
        </authorList>
    </citation>
    <scope>NUCLEOTIDE SEQUENCE [GENOMIC DNA]</scope>
    <scope>GAS VESICLE GENE CLUSTER</scope>
    <source>
        <strain>NRC-817</strain>
    </source>
</reference>
<reference evidence="11" key="2">
    <citation type="journal article" date="1996" name="J. Bacteriol.">
        <title>Transcript analysis of the c-vac region and differential synthesis of the two regulatory gas vesicle proteins GvpD and GvpE in Halobacterium salinarium PHH4.</title>
        <authorList>
            <person name="Krueger K."/>
            <person name="Pfeifer F."/>
        </authorList>
    </citation>
    <scope>NUCLEOTIDE SEQUENCE [GENOMIC DNA]</scope>
    <scope>INDUCTION</scope>
    <source>
        <strain>PHH1 /PHH4</strain>
    </source>
</reference>
<reference key="3">
    <citation type="journal article" date="2000" name="Proc. Natl. Acad. Sci. U.S.A.">
        <title>Genome sequence of Halobacterium species NRC-1.</title>
        <authorList>
            <person name="Ng W.V."/>
            <person name="Kennedy S.P."/>
            <person name="Mahairas G.G."/>
            <person name="Berquist B."/>
            <person name="Pan M."/>
            <person name="Shukla H.D."/>
            <person name="Lasky S.R."/>
            <person name="Baliga N.S."/>
            <person name="Thorsson V."/>
            <person name="Sbrogna J."/>
            <person name="Swartzell S."/>
            <person name="Weir D."/>
            <person name="Hall J."/>
            <person name="Dahl T.A."/>
            <person name="Welti R."/>
            <person name="Goo Y.A."/>
            <person name="Leithauser B."/>
            <person name="Keller K."/>
            <person name="Cruz R."/>
            <person name="Danson M.J."/>
            <person name="Hough D.W."/>
            <person name="Maddocks D.G."/>
            <person name="Jablonski P.E."/>
            <person name="Krebs M.P."/>
            <person name="Angevine C.M."/>
            <person name="Dale H."/>
            <person name="Isenbarger T.A."/>
            <person name="Peck R.F."/>
            <person name="Pohlschroder M."/>
            <person name="Spudich J.L."/>
            <person name="Jung K.-H."/>
            <person name="Alam M."/>
            <person name="Freitas T."/>
            <person name="Hou S."/>
            <person name="Daniels C.J."/>
            <person name="Dennis P.P."/>
            <person name="Omer A.D."/>
            <person name="Ebhardt H."/>
            <person name="Lowe T.M."/>
            <person name="Liang P."/>
            <person name="Riley M."/>
            <person name="Hood L."/>
            <person name="DasSarma S."/>
        </authorList>
    </citation>
    <scope>NUCLEOTIDE SEQUENCE [LARGE SCALE GENOMIC DNA]</scope>
    <source>
        <strain>ATCC 700922 / JCM 11081 / NRC-1</strain>
        <plasmid>pNRC200</plasmid>
    </source>
</reference>
<reference key="4">
    <citation type="journal article" date="1997" name="Microbiology">
        <title>Growth competition between Halobacterium salinarium strain PHH1 and mutants affected in gas vesicle synthesis.</title>
        <authorList>
            <person name="Beard S.J."/>
            <person name="Hayes P.K."/>
            <person name="Walsby A.E."/>
        </authorList>
    </citation>
    <scope>FUNCTION IN BUOYANCY</scope>
    <scope>POSSIBLE INDUCTION BY OXYGEN LIMITATION</scope>
    <source>
        <strain>PHH1</strain>
    </source>
</reference>
<reference key="5">
    <citation type="journal article" date="1998" name="Microbiology">
        <title>Structural characteristics of halobacterial gas vesicles.</title>
        <authorList>
            <person name="Offner S."/>
            <person name="Ziese U."/>
            <person name="Wanner G."/>
            <person name="Typke D."/>
            <person name="Pfeifer F."/>
        </authorList>
    </citation>
    <scope>GAS VESICLE FORMATION</scope>
    <source>
        <strain>PHH1</strain>
    </source>
</reference>
<sequence>MTVTDHREAMIEARAAVTDVREAMDAYAEEFAADVNSIRTDSRHRENIRDMRAAVDAYCESFATAVSTHHDETAALRADLEATAAAFDAYTTAFAADAAAMHDVSALHRDIEALREEFRAVTTDFEDYTTDEFAPAVGALHADAAETAASFTAKQEGFEAYRHDVHESAVPALTADIAATRADFDDTAASFAAYARAFYGHTDDATAQTDADDTTAQTDVLSGQATVTRAQPEEDDTPEDMVQCRVCEEYYQAITEPHLQTHEMTIDGYRDEYGEDVPLRPDDHA</sequence>
<feature type="chain" id="PRO_0000182673" description="Gas vesicle protein C2">
    <location>
        <begin position="1"/>
        <end position="285"/>
    </location>
</feature>
<feature type="repeat" description="1" evidence="1 10">
    <location>
        <begin position="22"/>
        <end position="52"/>
    </location>
</feature>
<feature type="repeat" description="2" evidence="1 10">
    <location>
        <begin position="53"/>
        <end position="84"/>
    </location>
</feature>
<feature type="repeat" description="3" evidence="1 10">
    <location>
        <begin position="85"/>
        <end position="122"/>
    </location>
</feature>
<feature type="repeat" description="4" evidence="1 10">
    <location>
        <begin position="123"/>
        <end position="155"/>
    </location>
</feature>
<feature type="repeat" description="5" evidence="1 10">
    <location>
        <begin position="156"/>
        <end position="188"/>
    </location>
</feature>
<feature type="repeat" description="6" evidence="1 10">
    <location>
        <begin position="189"/>
        <end position="220"/>
    </location>
</feature>
<feature type="region of interest" description="6 X approximate tandem repeats" evidence="1 10">
    <location>
        <begin position="22"/>
        <end position="220"/>
    </location>
</feature>
<feature type="sequence conflict" description="In Ref. 1; CAA45993 and 2; CAA64340." evidence="9" ref="1 2">
    <original>A</original>
    <variation>G</variation>
    <location>
        <position position="144"/>
    </location>
</feature>
<feature type="sequence conflict" description="In Ref. 1; CAA45993 and 2; CAA64340." evidence="9" ref="1 2">
    <original>DVLSGQATVTR</original>
    <variation>GRAVGPGHSHQ</variation>
    <location>
        <begin position="219"/>
        <end position="229"/>
    </location>
</feature>